<gene>
    <name evidence="1" type="primary">rps27ae</name>
    <name type="ordered locus">MA_3696</name>
</gene>
<organism>
    <name type="scientific">Methanosarcina acetivorans (strain ATCC 35395 / DSM 2834 / JCM 12185 / C2A)</name>
    <dbReference type="NCBI Taxonomy" id="188937"/>
    <lineage>
        <taxon>Archaea</taxon>
        <taxon>Methanobacteriati</taxon>
        <taxon>Methanobacteriota</taxon>
        <taxon>Stenosarchaea group</taxon>
        <taxon>Methanomicrobia</taxon>
        <taxon>Methanosarcinales</taxon>
        <taxon>Methanosarcinaceae</taxon>
        <taxon>Methanosarcina</taxon>
    </lineage>
</organism>
<evidence type="ECO:0000255" key="1">
    <source>
        <dbReference type="HAMAP-Rule" id="MF_00777"/>
    </source>
</evidence>
<evidence type="ECO:0000305" key="2"/>
<proteinExistence type="inferred from homology"/>
<accession>Q8TJT1</accession>
<comment type="cofactor">
    <cofactor evidence="1">
        <name>Zn(2+)</name>
        <dbReference type="ChEBI" id="CHEBI:29105"/>
    </cofactor>
    <text evidence="1">Binds 1 zinc ion per subunit.</text>
</comment>
<comment type="subunit">
    <text evidence="1">Part of the 30S ribosomal subunit.</text>
</comment>
<comment type="similarity">
    <text evidence="1">Belongs to the eukaryotic ribosomal protein eS31 family.</text>
</comment>
<comment type="sequence caution" evidence="2">
    <conflict type="erroneous initiation">
        <sequence resource="EMBL-CDS" id="AAM07051"/>
    </conflict>
</comment>
<sequence length="49" mass="5559">MAVKDYYKVQGDSVTRLKQFCPRCGPGVFLADHKNRLACGKCGYTEFKK</sequence>
<keyword id="KW-0479">Metal-binding</keyword>
<keyword id="KW-1185">Reference proteome</keyword>
<keyword id="KW-0687">Ribonucleoprotein</keyword>
<keyword id="KW-0689">Ribosomal protein</keyword>
<keyword id="KW-0862">Zinc</keyword>
<keyword id="KW-0863">Zinc-finger</keyword>
<protein>
    <recommendedName>
        <fullName evidence="1">Small ribosomal subunit protein eS31</fullName>
    </recommendedName>
    <alternativeName>
        <fullName evidence="2">30S ribosomal protein S27ae</fullName>
    </alternativeName>
</protein>
<feature type="chain" id="PRO_0000137693" description="Small ribosomal subunit protein eS31">
    <location>
        <begin position="1"/>
        <end position="49"/>
    </location>
</feature>
<feature type="zinc finger region" description="C4-type" evidence="1">
    <location>
        <begin position="21"/>
        <end position="42"/>
    </location>
</feature>
<feature type="binding site" evidence="1">
    <location>
        <position position="21"/>
    </location>
    <ligand>
        <name>Zn(2+)</name>
        <dbReference type="ChEBI" id="CHEBI:29105"/>
    </ligand>
</feature>
<feature type="binding site" evidence="1">
    <location>
        <position position="24"/>
    </location>
    <ligand>
        <name>Zn(2+)</name>
        <dbReference type="ChEBI" id="CHEBI:29105"/>
    </ligand>
</feature>
<feature type="binding site" evidence="1">
    <location>
        <position position="39"/>
    </location>
    <ligand>
        <name>Zn(2+)</name>
        <dbReference type="ChEBI" id="CHEBI:29105"/>
    </ligand>
</feature>
<feature type="binding site" evidence="1">
    <location>
        <position position="42"/>
    </location>
    <ligand>
        <name>Zn(2+)</name>
        <dbReference type="ChEBI" id="CHEBI:29105"/>
    </ligand>
</feature>
<reference key="1">
    <citation type="journal article" date="2002" name="Genome Res.">
        <title>The genome of Methanosarcina acetivorans reveals extensive metabolic and physiological diversity.</title>
        <authorList>
            <person name="Galagan J.E."/>
            <person name="Nusbaum C."/>
            <person name="Roy A."/>
            <person name="Endrizzi M.G."/>
            <person name="Macdonald P."/>
            <person name="FitzHugh W."/>
            <person name="Calvo S."/>
            <person name="Engels R."/>
            <person name="Smirnov S."/>
            <person name="Atnoor D."/>
            <person name="Brown A."/>
            <person name="Allen N."/>
            <person name="Naylor J."/>
            <person name="Stange-Thomann N."/>
            <person name="DeArellano K."/>
            <person name="Johnson R."/>
            <person name="Linton L."/>
            <person name="McEwan P."/>
            <person name="McKernan K."/>
            <person name="Talamas J."/>
            <person name="Tirrell A."/>
            <person name="Ye W."/>
            <person name="Zimmer A."/>
            <person name="Barber R.D."/>
            <person name="Cann I."/>
            <person name="Graham D.E."/>
            <person name="Grahame D.A."/>
            <person name="Guss A.M."/>
            <person name="Hedderich R."/>
            <person name="Ingram-Smith C."/>
            <person name="Kuettner H.C."/>
            <person name="Krzycki J.A."/>
            <person name="Leigh J.A."/>
            <person name="Li W."/>
            <person name="Liu J."/>
            <person name="Mukhopadhyay B."/>
            <person name="Reeve J.N."/>
            <person name="Smith K."/>
            <person name="Springer T.A."/>
            <person name="Umayam L.A."/>
            <person name="White O."/>
            <person name="White R.H."/>
            <person name="de Macario E.C."/>
            <person name="Ferry J.G."/>
            <person name="Jarrell K.F."/>
            <person name="Jing H."/>
            <person name="Macario A.J.L."/>
            <person name="Paulsen I.T."/>
            <person name="Pritchett M."/>
            <person name="Sowers K.R."/>
            <person name="Swanson R.V."/>
            <person name="Zinder S.H."/>
            <person name="Lander E."/>
            <person name="Metcalf W.W."/>
            <person name="Birren B."/>
        </authorList>
    </citation>
    <scope>NUCLEOTIDE SEQUENCE [LARGE SCALE GENOMIC DNA]</scope>
    <source>
        <strain>ATCC 35395 / DSM 2834 / JCM 12185 / C2A</strain>
    </source>
</reference>
<name>RS27A_METAC</name>
<dbReference type="EMBL" id="AE010299">
    <property type="protein sequence ID" value="AAM07051.1"/>
    <property type="status" value="ALT_INIT"/>
    <property type="molecule type" value="Genomic_DNA"/>
</dbReference>
<dbReference type="RefSeq" id="WP_011032551.1">
    <property type="nucleotide sequence ID" value="NC_003552.1"/>
</dbReference>
<dbReference type="SMR" id="Q8TJT1"/>
<dbReference type="FunCoup" id="Q8TJT1">
    <property type="interactions" value="57"/>
</dbReference>
<dbReference type="STRING" id="188937.MA_3696"/>
<dbReference type="EnsemblBacteria" id="AAM07051">
    <property type="protein sequence ID" value="AAM07051"/>
    <property type="gene ID" value="MA_3696"/>
</dbReference>
<dbReference type="KEGG" id="mac:MA_3696"/>
<dbReference type="HOGENOM" id="CLU_179743_2_0_2"/>
<dbReference type="InParanoid" id="Q8TJT1"/>
<dbReference type="OrthoDB" id="25142at2157"/>
<dbReference type="PhylomeDB" id="Q8TJT1"/>
<dbReference type="Proteomes" id="UP000002487">
    <property type="component" value="Chromosome"/>
</dbReference>
<dbReference type="GO" id="GO:1990904">
    <property type="term" value="C:ribonucleoprotein complex"/>
    <property type="evidence" value="ECO:0007669"/>
    <property type="project" value="UniProtKB-KW"/>
</dbReference>
<dbReference type="GO" id="GO:0005840">
    <property type="term" value="C:ribosome"/>
    <property type="evidence" value="ECO:0007669"/>
    <property type="project" value="UniProtKB-KW"/>
</dbReference>
<dbReference type="GO" id="GO:0003735">
    <property type="term" value="F:structural constituent of ribosome"/>
    <property type="evidence" value="ECO:0007669"/>
    <property type="project" value="InterPro"/>
</dbReference>
<dbReference type="GO" id="GO:0008270">
    <property type="term" value="F:zinc ion binding"/>
    <property type="evidence" value="ECO:0007669"/>
    <property type="project" value="UniProtKB-UniRule"/>
</dbReference>
<dbReference type="GO" id="GO:0006412">
    <property type="term" value="P:translation"/>
    <property type="evidence" value="ECO:0007669"/>
    <property type="project" value="UniProtKB-UniRule"/>
</dbReference>
<dbReference type="Gene3D" id="6.20.50.180">
    <property type="match status" value="1"/>
</dbReference>
<dbReference type="HAMAP" id="MF_00777">
    <property type="entry name" value="Ribosomal_eS31"/>
    <property type="match status" value="1"/>
</dbReference>
<dbReference type="InterPro" id="IPR002906">
    <property type="entry name" value="Ribosomal_eS31"/>
</dbReference>
<dbReference type="InterPro" id="IPR022845">
    <property type="entry name" value="Ribosomal_eS31_arc"/>
</dbReference>
<dbReference type="InterPro" id="IPR011332">
    <property type="entry name" value="Ribosomal_zn-bd"/>
</dbReference>
<dbReference type="NCBIfam" id="NF001669">
    <property type="entry name" value="PRK00432.1"/>
    <property type="match status" value="1"/>
</dbReference>
<dbReference type="Pfam" id="PF01599">
    <property type="entry name" value="Ribosomal_S27"/>
    <property type="match status" value="1"/>
</dbReference>
<dbReference type="SMART" id="SM01402">
    <property type="entry name" value="Ribosomal_S27"/>
    <property type="match status" value="1"/>
</dbReference>
<dbReference type="SUPFAM" id="SSF57829">
    <property type="entry name" value="Zn-binding ribosomal proteins"/>
    <property type="match status" value="1"/>
</dbReference>